<evidence type="ECO:0000250" key="1">
    <source>
        <dbReference type="UniProtKB" id="P86405"/>
    </source>
</evidence>
<evidence type="ECO:0000255" key="2">
    <source>
        <dbReference type="PROSITE-ProRule" id="PRU01210"/>
    </source>
</evidence>
<evidence type="ECO:0000269" key="3">
    <source>
    </source>
</evidence>
<evidence type="ECO:0000303" key="4">
    <source>
    </source>
</evidence>
<evidence type="ECO:0000305" key="5"/>
<evidence type="ECO:0000305" key="6">
    <source>
    </source>
</evidence>
<evidence type="ECO:0000312" key="7">
    <source>
        <dbReference type="EMBL" id="ADT82853.1"/>
    </source>
</evidence>
<organism>
    <name type="scientific">Mesobuthus eupeus</name>
    <name type="common">Lesser Asian scorpion</name>
    <name type="synonym">Buthus eupeus</name>
    <dbReference type="NCBI Taxonomy" id="34648"/>
    <lineage>
        <taxon>Eukaryota</taxon>
        <taxon>Metazoa</taxon>
        <taxon>Ecdysozoa</taxon>
        <taxon>Arthropoda</taxon>
        <taxon>Chelicerata</taxon>
        <taxon>Arachnida</taxon>
        <taxon>Scorpiones</taxon>
        <taxon>Buthida</taxon>
        <taxon>Buthoidea</taxon>
        <taxon>Buthidae</taxon>
        <taxon>Mesobuthus</taxon>
    </lineage>
</organism>
<proteinExistence type="evidence at transcript level"/>
<protein>
    <recommendedName>
        <fullName evidence="4">Sodium channel neurotoxin MeuNaTxalpha-11</fullName>
    </recommendedName>
</protein>
<name>SCXNB_MESEU</name>
<feature type="signal peptide" evidence="5">
    <location>
        <begin position="1" status="less than"/>
        <end position="7"/>
    </location>
</feature>
<feature type="chain" id="PRO_0000447455" description="Sodium channel neurotoxin MeuNaTxalpha-11" evidence="6">
    <location>
        <begin position="8"/>
        <end position="73"/>
    </location>
</feature>
<feature type="propeptide" id="PRO_0000447456" description="Removed by a carboxypeptidase" evidence="5">
    <location>
        <position position="74"/>
    </location>
</feature>
<feature type="domain" description="LCN-type CS-alpha/beta" evidence="2">
    <location>
        <begin position="9"/>
        <end position="73"/>
    </location>
</feature>
<feature type="disulfide bond" evidence="1">
    <location>
        <begin position="19"/>
        <end position="72"/>
    </location>
</feature>
<feature type="disulfide bond" evidence="1">
    <location>
        <begin position="23"/>
        <end position="45"/>
    </location>
</feature>
<feature type="disulfide bond" evidence="1">
    <location>
        <begin position="31"/>
        <end position="55"/>
    </location>
</feature>
<feature type="disulfide bond" evidence="1">
    <location>
        <begin position="35"/>
        <end position="57"/>
    </location>
</feature>
<feature type="non-terminal residue" evidence="7">
    <location>
        <position position="1"/>
    </location>
</feature>
<sequence>LMTGVESARDAYIAKPHNCVYECFDAFSSYCNGVCTKNGAKSGYCLILGTYGNGCWCIALPDNVPIRIPGKCHR</sequence>
<comment type="function">
    <text evidence="1">Alpha toxins bind voltage-independently at site-3 of sodium channels (Nav) and inhibit the inactivation of the activated channels, thereby blocking neuronal transmission.</text>
</comment>
<comment type="subcellular location">
    <subcellularLocation>
        <location evidence="3">Secreted</location>
    </subcellularLocation>
</comment>
<comment type="tissue specificity">
    <text evidence="6">Expressed by the venom gland.</text>
</comment>
<comment type="domain">
    <text evidence="5">Has the structural arrangement of an alpha-helix connected to antiparallel beta-sheets by disulfide bonds (CS-alpha/beta).</text>
</comment>
<comment type="similarity">
    <text evidence="5">Belongs to the long (4 C-C) scorpion toxin superfamily. Sodium channel inhibitor family. Alpha subfamily.</text>
</comment>
<keyword id="KW-1015">Disulfide bond</keyword>
<keyword id="KW-0872">Ion channel impairing toxin</keyword>
<keyword id="KW-0528">Neurotoxin</keyword>
<keyword id="KW-0964">Secreted</keyword>
<keyword id="KW-0732">Signal</keyword>
<keyword id="KW-0800">Toxin</keyword>
<keyword id="KW-0738">Voltage-gated sodium channel impairing toxin</keyword>
<accession>E7CZZ0</accession>
<reference key="1">
    <citation type="journal article" date="2012" name="Mol. Cell. Proteomics">
        <title>Evolutionary diversification of Mesobuthus alpha-scorpion toxins affecting sodium channels.</title>
        <authorList>
            <person name="Zhu S."/>
            <person name="Peigneur S."/>
            <person name="Gao B."/>
            <person name="Lu X."/>
            <person name="Cao C."/>
            <person name="Tytgat J."/>
        </authorList>
    </citation>
    <scope>NUCLEOTIDE SEQUENCE [MRNA]</scope>
    <source>
        <tissue>Venom gland</tissue>
    </source>
</reference>
<dbReference type="EMBL" id="HM989913">
    <property type="protein sequence ID" value="ADT82853.1"/>
    <property type="molecule type" value="mRNA"/>
</dbReference>
<dbReference type="SMR" id="E7CZZ0"/>
<dbReference type="GO" id="GO:0005576">
    <property type="term" value="C:extracellular region"/>
    <property type="evidence" value="ECO:0007669"/>
    <property type="project" value="UniProtKB-SubCell"/>
</dbReference>
<dbReference type="GO" id="GO:0019871">
    <property type="term" value="F:sodium channel inhibitor activity"/>
    <property type="evidence" value="ECO:0007669"/>
    <property type="project" value="InterPro"/>
</dbReference>
<dbReference type="GO" id="GO:0090729">
    <property type="term" value="F:toxin activity"/>
    <property type="evidence" value="ECO:0007669"/>
    <property type="project" value="UniProtKB-KW"/>
</dbReference>
<dbReference type="GO" id="GO:0006952">
    <property type="term" value="P:defense response"/>
    <property type="evidence" value="ECO:0007669"/>
    <property type="project" value="InterPro"/>
</dbReference>
<dbReference type="CDD" id="cd23106">
    <property type="entry name" value="neurotoxins_LC_scorpion"/>
    <property type="match status" value="1"/>
</dbReference>
<dbReference type="FunFam" id="3.30.30.10:FF:000002">
    <property type="entry name" value="Alpha-like toxin BmK-M1"/>
    <property type="match status" value="1"/>
</dbReference>
<dbReference type="Gene3D" id="3.30.30.10">
    <property type="entry name" value="Knottin, scorpion toxin-like"/>
    <property type="match status" value="1"/>
</dbReference>
<dbReference type="InterPro" id="IPR044062">
    <property type="entry name" value="LCN-type_CS_alpha_beta_dom"/>
</dbReference>
<dbReference type="InterPro" id="IPR003614">
    <property type="entry name" value="Scorpion_toxin-like"/>
</dbReference>
<dbReference type="InterPro" id="IPR036574">
    <property type="entry name" value="Scorpion_toxin-like_sf"/>
</dbReference>
<dbReference type="InterPro" id="IPR018218">
    <property type="entry name" value="Scorpion_toxinL"/>
</dbReference>
<dbReference type="InterPro" id="IPR002061">
    <property type="entry name" value="Scorpion_toxinL/defensin"/>
</dbReference>
<dbReference type="Pfam" id="PF00537">
    <property type="entry name" value="Toxin_3"/>
    <property type="match status" value="1"/>
</dbReference>
<dbReference type="PRINTS" id="PR00285">
    <property type="entry name" value="SCORPNTOXIN"/>
</dbReference>
<dbReference type="SMART" id="SM00505">
    <property type="entry name" value="Knot1"/>
    <property type="match status" value="1"/>
</dbReference>
<dbReference type="SUPFAM" id="SSF57095">
    <property type="entry name" value="Scorpion toxin-like"/>
    <property type="match status" value="1"/>
</dbReference>
<dbReference type="PROSITE" id="PS51863">
    <property type="entry name" value="LCN_CSAB"/>
    <property type="match status" value="1"/>
</dbReference>